<keyword id="KW-0456">Lyase</keyword>
<keyword id="KW-0472">Membrane</keyword>
<keyword id="KW-0812">Transmembrane</keyword>
<keyword id="KW-1133">Transmembrane helix</keyword>
<reference key="1">
    <citation type="journal article" date="2011" name="PLoS Genet.">
        <title>Genome sequencing and comparative transcriptomics of the model entomopathogenic fungi Metarhizium anisopliae and M. acridum.</title>
        <authorList>
            <person name="Gao Q."/>
            <person name="Jin K."/>
            <person name="Ying S.-H."/>
            <person name="Zhang Y."/>
            <person name="Xiao G."/>
            <person name="Shang Y."/>
            <person name="Duan Z."/>
            <person name="Hu X."/>
            <person name="Xie X.-Q."/>
            <person name="Zhou G."/>
            <person name="Peng G."/>
            <person name="Luo Z."/>
            <person name="Huang W."/>
            <person name="Wang B."/>
            <person name="Fang W."/>
            <person name="Wang S."/>
            <person name="Zhong Y."/>
            <person name="Ma L.-J."/>
            <person name="St Leger R.J."/>
            <person name="Zhao G.-P."/>
            <person name="Pei Y."/>
            <person name="Feng M.-G."/>
            <person name="Xia Y."/>
            <person name="Wang C."/>
        </authorList>
    </citation>
    <scope>NUCLEOTIDE SEQUENCE [LARGE SCALE GENOMIC DNA]</scope>
    <source>
        <strain>ARSEF 23 / ATCC MYA-3075</strain>
    </source>
</reference>
<reference key="2">
    <citation type="journal article" date="2014" name="Proc. Natl. Acad. Sci. U.S.A.">
        <title>Trajectory and genomic determinants of fungal-pathogen speciation and host adaptation.</title>
        <authorList>
            <person name="Hu X."/>
            <person name="Xiao G."/>
            <person name="Zheng P."/>
            <person name="Shang Y."/>
            <person name="Su Y."/>
            <person name="Zhang X."/>
            <person name="Liu X."/>
            <person name="Zhan S."/>
            <person name="St Leger R.J."/>
            <person name="Wang C."/>
        </authorList>
    </citation>
    <scope>GENOME REANNOTATION</scope>
    <source>
        <strain>ARSEF 23 / ATCC MYA-3075</strain>
    </source>
</reference>
<reference key="3">
    <citation type="journal article" date="2016" name="J. Antibiot.">
        <title>New natural products isolated from Metarhizium robertsii ARSEF 23 by chemical screening and identification of the gene cluster through engineered biosynthesis in Aspergillus nidulans A1145.</title>
        <authorList>
            <person name="Kato H."/>
            <person name="Tsunematsu Y."/>
            <person name="Yamamoto T."/>
            <person name="Namiki T."/>
            <person name="Kishimoto S."/>
            <person name="Noguchi H."/>
            <person name="Watanabe K."/>
        </authorList>
    </citation>
    <scope>FUNCTION</scope>
    <scope>PATHWAY</scope>
</reference>
<reference key="4">
    <citation type="journal article" date="2022" name="Environ. Microbiol.">
        <title>Mutation of a prenyltransferase results in accumulation of subglutinols and destruxins and enhanced virulence in the insect pathogen, Metarhizium anisopliae.</title>
        <authorList>
            <person name="Li C."/>
            <person name="Huang W."/>
            <person name="Zhou T."/>
            <person name="Zhao Q."/>
            <person name="Huang P."/>
            <person name="Qi P."/>
            <person name="Huang S."/>
            <person name="Huang S."/>
            <person name="Keyhani N.O."/>
            <person name="Huang Z."/>
        </authorList>
    </citation>
    <scope>FUNCTION</scope>
    <scope>INDUCTION</scope>
</reference>
<gene>
    <name evidence="4" type="primary">subB</name>
    <name type="ORF">MAA_07497</name>
</gene>
<comment type="function">
    <text evidence="2 6 7">Terpene cyclase; part of the gene cluster that mediates the biosynthesis of the immunosuppressants subglutinols, meroterpenoids consisting of an alpha-pyrone (4-hydroxy-5,6-dimethyl-2-pyrone) moiety attached to a decalin core fused to a five-membered cyclic ether carrying a prenylside chain (PubMed:27189118). The first step of the pathway is the synthesis of the alpha-pyrone moiety by the polyketide synthase subA via condensation of one acetyl-CoA starter unit with 3 malonyl-CoA units and 2 methylations (PubMed:27189118). The alpha-pyrone is then combined with geranylgeranyl pyrophosphate (GGPP) formed by the GGPP synthase subD through the action of the prenyltransferase subC to yield a linear alpha-pyrone diterpenoid (PubMed:27189118). Subsequent steps in the subglutinol biosynthetic pathway involve the decalin core formation, which is thought to be initiated by the epoxidation of the C10-C11 olefin by the FAD-dependent oxidoreductase subE (Probable). The following cyclization cascade would be catalyzed by the terpene cyclase subB (Probable). Lastly, the FAD-dependent dehydrogenase subF probably catalyzes the five-membered cyclic ether formation to complete the formation of subglutinol A (Probable). Subsequent redox reactions appear to give rise to subglutinol C and D, however, it remains unclear which enzymes are responsible for these transformations (Probable). SubD may have secondary function in the conversion of the identified subglutinols to subglutinol analog 45, which seems to be the major product of the cluster (PubMed:34863012).</text>
</comment>
<comment type="pathway">
    <text evidence="2">Secondary metabolite biosynthesis; terpenoid biosynthesis.</text>
</comment>
<comment type="subcellular location">
    <subcellularLocation>
        <location evidence="1">Membrane</location>
        <topology evidence="1">Multi-pass membrane protein</topology>
    </subcellularLocation>
</comment>
<comment type="induction">
    <text evidence="3">The subglutinol cluster is highly expressed when mycelia and hyphae are transferred to fresh media for a 3 hour induction period, remaining expressed under conditions of heat shock (PubMed:34863012). The cluster is repressed in cultures reaching stationary phase or in early germinating cultures, as well as under conditions of UV, salt and oxidative stress (PubMed:34863012).</text>
</comment>
<comment type="similarity">
    <text evidence="5">Belongs to the paxB family.</text>
</comment>
<accession>E9F5E8</accession>
<name>SUBB_METRA</name>
<evidence type="ECO:0000255" key="1"/>
<evidence type="ECO:0000269" key="2">
    <source>
    </source>
</evidence>
<evidence type="ECO:0000269" key="3">
    <source>
    </source>
</evidence>
<evidence type="ECO:0000303" key="4">
    <source>
    </source>
</evidence>
<evidence type="ECO:0000305" key="5"/>
<evidence type="ECO:0000305" key="6">
    <source>
    </source>
</evidence>
<evidence type="ECO:0000305" key="7">
    <source>
    </source>
</evidence>
<organism>
    <name type="scientific">Metarhizium robertsii (strain ARSEF 23 / ATCC MYA-3075)</name>
    <name type="common">Metarhizium anisopliae (strain ARSEF 23)</name>
    <dbReference type="NCBI Taxonomy" id="655844"/>
    <lineage>
        <taxon>Eukaryota</taxon>
        <taxon>Fungi</taxon>
        <taxon>Dikarya</taxon>
        <taxon>Ascomycota</taxon>
        <taxon>Pezizomycotina</taxon>
        <taxon>Sordariomycetes</taxon>
        <taxon>Hypocreomycetidae</taxon>
        <taxon>Hypocreales</taxon>
        <taxon>Clavicipitaceae</taxon>
        <taxon>Metarhizium</taxon>
    </lineage>
</organism>
<sequence length="173" mass="19296">MNAADISRAPPGYLEVAWIADTCKLLMGLGWTTNYAGMIYKSLKDRTYGMALMPLCCNFAWELTYAVIYPFGSRQDKFTHYFGLMLNCGVMYTAVKNAEREWTHAPLVRRNLPFIFIICIAAWTTAHLALALQIGPSHAQAFSAYGCQLLLSVGALCQLLSRGSSRGASYFLW</sequence>
<protein>
    <recommendedName>
        <fullName evidence="4">Terpene cyclase subB</fullName>
        <ecNumber evidence="6">4.2.3.-</ecNumber>
    </recommendedName>
    <alternativeName>
        <fullName evidence="4">Subglutinol biosynthesis cluster protein B</fullName>
    </alternativeName>
</protein>
<proteinExistence type="evidence at transcript level"/>
<feature type="chain" id="PRO_0000451338" description="Terpene cyclase subB">
    <location>
        <begin position="1"/>
        <end position="173"/>
    </location>
</feature>
<feature type="transmembrane region" description="Helical" evidence="1">
    <location>
        <begin position="11"/>
        <end position="31"/>
    </location>
</feature>
<feature type="transmembrane region" description="Helical" evidence="1">
    <location>
        <begin position="51"/>
        <end position="71"/>
    </location>
</feature>
<feature type="transmembrane region" description="Helical" evidence="1">
    <location>
        <begin position="112"/>
        <end position="132"/>
    </location>
</feature>
<feature type="transmembrane region" description="Helical" evidence="1">
    <location>
        <begin position="141"/>
        <end position="161"/>
    </location>
</feature>
<dbReference type="EC" id="4.2.3.-" evidence="6"/>
<dbReference type="EMBL" id="ADNJ02000014">
    <property type="protein sequence ID" value="EFY96951.2"/>
    <property type="molecule type" value="Genomic_DNA"/>
</dbReference>
<dbReference type="RefSeq" id="XP_007823686.2">
    <property type="nucleotide sequence ID" value="XM_007825495.2"/>
</dbReference>
<dbReference type="GeneID" id="19261783"/>
<dbReference type="KEGG" id="maj:MAA_07497"/>
<dbReference type="HOGENOM" id="CLU_087059_3_0_1"/>
<dbReference type="OrthoDB" id="5294024at2759"/>
<dbReference type="UniPathway" id="UPA00213"/>
<dbReference type="Proteomes" id="UP000002498">
    <property type="component" value="Unassembled WGS sequence"/>
</dbReference>
<dbReference type="GO" id="GO:0016020">
    <property type="term" value="C:membrane"/>
    <property type="evidence" value="ECO:0007669"/>
    <property type="project" value="UniProtKB-SubCell"/>
</dbReference>
<dbReference type="GO" id="GO:0016829">
    <property type="term" value="F:lyase activity"/>
    <property type="evidence" value="ECO:0007669"/>
    <property type="project" value="UniProtKB-KW"/>
</dbReference>
<dbReference type="GO" id="GO:0016114">
    <property type="term" value="P:terpenoid biosynthetic process"/>
    <property type="evidence" value="ECO:0007669"/>
    <property type="project" value="UniProtKB-UniPathway"/>
</dbReference>
<dbReference type="InterPro" id="IPR039020">
    <property type="entry name" value="PaxB-like"/>
</dbReference>
<dbReference type="PANTHER" id="PTHR42038">
    <property type="match status" value="1"/>
</dbReference>
<dbReference type="PANTHER" id="PTHR42038:SF2">
    <property type="entry name" value="TERPENE CYCLASE AUSL"/>
    <property type="match status" value="1"/>
</dbReference>
<dbReference type="Pfam" id="PF25129">
    <property type="entry name" value="Pyr4-TMTC"/>
    <property type="match status" value="1"/>
</dbReference>